<comment type="similarity">
    <text evidence="1">Belongs to the SfsA family.</text>
</comment>
<gene>
    <name evidence="1" type="primary">sfsA</name>
    <name type="ordered locus">Avin_42620</name>
</gene>
<evidence type="ECO:0000255" key="1">
    <source>
        <dbReference type="HAMAP-Rule" id="MF_00095"/>
    </source>
</evidence>
<feature type="chain" id="PRO_1000202717" description="Sugar fermentation stimulation protein homolog">
    <location>
        <begin position="1"/>
        <end position="235"/>
    </location>
</feature>
<proteinExistence type="inferred from homology"/>
<organism>
    <name type="scientific">Azotobacter vinelandii (strain DJ / ATCC BAA-1303)</name>
    <dbReference type="NCBI Taxonomy" id="322710"/>
    <lineage>
        <taxon>Bacteria</taxon>
        <taxon>Pseudomonadati</taxon>
        <taxon>Pseudomonadota</taxon>
        <taxon>Gammaproteobacteria</taxon>
        <taxon>Pseudomonadales</taxon>
        <taxon>Pseudomonadaceae</taxon>
        <taxon>Azotobacter</taxon>
    </lineage>
</organism>
<dbReference type="EMBL" id="CP001157">
    <property type="protein sequence ID" value="ACO80385.1"/>
    <property type="molecule type" value="Genomic_DNA"/>
</dbReference>
<dbReference type="RefSeq" id="WP_012702753.1">
    <property type="nucleotide sequence ID" value="NC_012560.1"/>
</dbReference>
<dbReference type="SMR" id="C1DFI9"/>
<dbReference type="STRING" id="322710.Avin_42620"/>
<dbReference type="EnsemblBacteria" id="ACO80385">
    <property type="protein sequence ID" value="ACO80385"/>
    <property type="gene ID" value="Avin_42620"/>
</dbReference>
<dbReference type="GeneID" id="88187177"/>
<dbReference type="KEGG" id="avn:Avin_42620"/>
<dbReference type="eggNOG" id="COG1489">
    <property type="taxonomic scope" value="Bacteria"/>
</dbReference>
<dbReference type="HOGENOM" id="CLU_052299_2_0_6"/>
<dbReference type="OrthoDB" id="9802365at2"/>
<dbReference type="Proteomes" id="UP000002424">
    <property type="component" value="Chromosome"/>
</dbReference>
<dbReference type="GO" id="GO:0003677">
    <property type="term" value="F:DNA binding"/>
    <property type="evidence" value="ECO:0007669"/>
    <property type="project" value="InterPro"/>
</dbReference>
<dbReference type="CDD" id="cd22359">
    <property type="entry name" value="SfsA-like_bacterial"/>
    <property type="match status" value="1"/>
</dbReference>
<dbReference type="FunFam" id="2.40.50.580:FF:000001">
    <property type="entry name" value="Sugar fermentation stimulation protein A"/>
    <property type="match status" value="1"/>
</dbReference>
<dbReference type="Gene3D" id="2.40.50.580">
    <property type="match status" value="1"/>
</dbReference>
<dbReference type="Gene3D" id="3.40.1350.60">
    <property type="match status" value="1"/>
</dbReference>
<dbReference type="HAMAP" id="MF_00095">
    <property type="entry name" value="SfsA"/>
    <property type="match status" value="1"/>
</dbReference>
<dbReference type="InterPro" id="IPR005224">
    <property type="entry name" value="SfsA"/>
</dbReference>
<dbReference type="InterPro" id="IPR040452">
    <property type="entry name" value="SfsA_C"/>
</dbReference>
<dbReference type="InterPro" id="IPR041465">
    <property type="entry name" value="SfsA_N"/>
</dbReference>
<dbReference type="NCBIfam" id="TIGR00230">
    <property type="entry name" value="sfsA"/>
    <property type="match status" value="1"/>
</dbReference>
<dbReference type="PANTHER" id="PTHR30545">
    <property type="entry name" value="SUGAR FERMENTATION STIMULATION PROTEIN A"/>
    <property type="match status" value="1"/>
</dbReference>
<dbReference type="PANTHER" id="PTHR30545:SF2">
    <property type="entry name" value="SUGAR FERMENTATION STIMULATION PROTEIN A"/>
    <property type="match status" value="1"/>
</dbReference>
<dbReference type="Pfam" id="PF03749">
    <property type="entry name" value="SfsA"/>
    <property type="match status" value="1"/>
</dbReference>
<dbReference type="Pfam" id="PF17746">
    <property type="entry name" value="SfsA_N"/>
    <property type="match status" value="1"/>
</dbReference>
<accession>C1DFI9</accession>
<reference key="1">
    <citation type="journal article" date="2009" name="J. Bacteriol.">
        <title>Genome sequence of Azotobacter vinelandii, an obligate aerobe specialized to support diverse anaerobic metabolic processes.</title>
        <authorList>
            <person name="Setubal J.C."/>
            <person name="Dos Santos P."/>
            <person name="Goldman B.S."/>
            <person name="Ertesvaag H."/>
            <person name="Espin G."/>
            <person name="Rubio L.M."/>
            <person name="Valla S."/>
            <person name="Almeida N.F."/>
            <person name="Balasubramanian D."/>
            <person name="Cromes L."/>
            <person name="Curatti L."/>
            <person name="Du Z."/>
            <person name="Godsy E."/>
            <person name="Goodner B."/>
            <person name="Hellner-Burris K."/>
            <person name="Hernandez J.A."/>
            <person name="Houmiel K."/>
            <person name="Imperial J."/>
            <person name="Kennedy C."/>
            <person name="Larson T.J."/>
            <person name="Latreille P."/>
            <person name="Ligon L.S."/>
            <person name="Lu J."/>
            <person name="Maerk M."/>
            <person name="Miller N.M."/>
            <person name="Norton S."/>
            <person name="O'Carroll I.P."/>
            <person name="Paulsen I."/>
            <person name="Raulfs E.C."/>
            <person name="Roemer R."/>
            <person name="Rosser J."/>
            <person name="Segura D."/>
            <person name="Slater S."/>
            <person name="Stricklin S.L."/>
            <person name="Studholme D.J."/>
            <person name="Sun J."/>
            <person name="Viana C.J."/>
            <person name="Wallin E."/>
            <person name="Wang B."/>
            <person name="Wheeler C."/>
            <person name="Zhu H."/>
            <person name="Dean D.R."/>
            <person name="Dixon R."/>
            <person name="Wood D."/>
        </authorList>
    </citation>
    <scope>NUCLEOTIDE SEQUENCE [LARGE SCALE GENOMIC DNA]</scope>
    <source>
        <strain>DJ / ATCC BAA-1303</strain>
    </source>
</reference>
<sequence>MRFDPPLEEGHLLRRYKRFFADIETPDGEALCIHCPNTGSMFNCMAEGGRVWFSRSNDPRRKLPGTWELSETPQGRLACVNTARANPLVEEALRAGSIAELTGFTGLRREVRYGLENSRVDFCLDYPDGTAFVEVKSVTLGFADSPVAAFPDARTERGAKHLRELAVLARQGVRTVQLYCVNLSGIAAVRPAAEIDPGYAQALREAVAAGVEVLAYGAELSPAAIRLVRRLEVCL</sequence>
<protein>
    <recommendedName>
        <fullName evidence="1">Sugar fermentation stimulation protein homolog</fullName>
    </recommendedName>
</protein>
<name>SFSA_AZOVD</name>